<dbReference type="EMBL" id="L77117">
    <property type="protein sequence ID" value="AAB98519.1"/>
    <property type="molecule type" value="Genomic_DNA"/>
</dbReference>
<dbReference type="PIR" id="H64365">
    <property type="entry name" value="H64365"/>
</dbReference>
<dbReference type="RefSeq" id="WP_010870032.1">
    <property type="nucleotide sequence ID" value="NC_000909.1"/>
</dbReference>
<dbReference type="FunCoup" id="Q57948">
    <property type="interactions" value="4"/>
</dbReference>
<dbReference type="STRING" id="243232.MJ_0528"/>
<dbReference type="PaxDb" id="243232-MJ_0528"/>
<dbReference type="EnsemblBacteria" id="AAB98519">
    <property type="protein sequence ID" value="AAB98519"/>
    <property type="gene ID" value="MJ_0528"/>
</dbReference>
<dbReference type="GeneID" id="1451393"/>
<dbReference type="KEGG" id="mja:MJ_0528"/>
<dbReference type="eggNOG" id="arCOG05035">
    <property type="taxonomic scope" value="Archaea"/>
</dbReference>
<dbReference type="HOGENOM" id="CLU_174516_1_0_2"/>
<dbReference type="InParanoid" id="Q57948"/>
<dbReference type="OrthoDB" id="81652at2157"/>
<dbReference type="Proteomes" id="UP000000805">
    <property type="component" value="Chromosome"/>
</dbReference>
<dbReference type="GO" id="GO:0005886">
    <property type="term" value="C:plasma membrane"/>
    <property type="evidence" value="ECO:0007669"/>
    <property type="project" value="UniProtKB-SubCell"/>
</dbReference>
<dbReference type="InterPro" id="IPR011306">
    <property type="entry name" value="Prd_NiFe_hyd_3_EhaA"/>
</dbReference>
<dbReference type="Pfam" id="PF17367">
    <property type="entry name" value="NiFe_hyd_3_EhaA"/>
    <property type="match status" value="1"/>
</dbReference>
<dbReference type="PIRSF" id="PIRSF005019">
    <property type="entry name" value="EhaA"/>
    <property type="match status" value="1"/>
</dbReference>
<accession>Q57948</accession>
<comment type="function">
    <text evidence="1">One of the integral membrane subunits of multisubunit membrane-bound [NiFe]-hydrogenase eha. Eha is predicted to form large electron transfer complex and might catalyze energy-driven reduction of low-potential redox carriers (By similarity).</text>
</comment>
<comment type="subunit">
    <text evidence="1">Putative multisubunit membrane-bound [NiFe]-hydrogenase eha is composed of at least 20 subunits.</text>
</comment>
<comment type="subcellular location">
    <subcellularLocation>
        <location evidence="3">Cell membrane</location>
        <topology evidence="3">Multi-pass membrane protein</topology>
    </subcellularLocation>
</comment>
<comment type="similarity">
    <text evidence="3">Belongs to the EhaA family.</text>
</comment>
<organism>
    <name type="scientific">Methanocaldococcus jannaschii (strain ATCC 43067 / DSM 2661 / JAL-1 / JCM 10045 / NBRC 100440)</name>
    <name type="common">Methanococcus jannaschii</name>
    <dbReference type="NCBI Taxonomy" id="243232"/>
    <lineage>
        <taxon>Archaea</taxon>
        <taxon>Methanobacteriati</taxon>
        <taxon>Methanobacteriota</taxon>
        <taxon>Methanomada group</taxon>
        <taxon>Methanococci</taxon>
        <taxon>Methanococcales</taxon>
        <taxon>Methanocaldococcaceae</taxon>
        <taxon>Methanocaldococcus</taxon>
    </lineage>
</organism>
<gene>
    <name type="primary">ehaA</name>
    <name type="ordered locus">MJ0528</name>
</gene>
<name>EHAA_METJA</name>
<keyword id="KW-1003">Cell membrane</keyword>
<keyword id="KW-0472">Membrane</keyword>
<keyword id="KW-1185">Reference proteome</keyword>
<keyword id="KW-0812">Transmembrane</keyword>
<keyword id="KW-1133">Transmembrane helix</keyword>
<protein>
    <recommendedName>
        <fullName>Probable [NiFe]-hydrogenase-type-3 Eha complex membrane subunit A</fullName>
    </recommendedName>
</protein>
<proteinExistence type="inferred from homology"/>
<sequence>MVYNNSLLVRVMDIIILYLIALITSVIVALVLKLPIIPKEKPIRFSFETSIIFPTPILALGIEAIFRNLFGDYISLAFFAGLFGALLSKYADKLFGEP</sequence>
<feature type="chain" id="PRO_0000138112" description="Probable [NiFe]-hydrogenase-type-3 Eha complex membrane subunit A">
    <location>
        <begin position="1"/>
        <end position="98"/>
    </location>
</feature>
<feature type="transmembrane region" description="Helical" evidence="2">
    <location>
        <begin position="11"/>
        <end position="31"/>
    </location>
</feature>
<feature type="transmembrane region" description="Helical" evidence="2">
    <location>
        <begin position="46"/>
        <end position="66"/>
    </location>
</feature>
<feature type="transmembrane region" description="Helical" evidence="2">
    <location>
        <begin position="68"/>
        <end position="88"/>
    </location>
</feature>
<evidence type="ECO:0000250" key="1"/>
<evidence type="ECO:0000255" key="2"/>
<evidence type="ECO:0000305" key="3"/>
<reference key="1">
    <citation type="journal article" date="1996" name="Science">
        <title>Complete genome sequence of the methanogenic archaeon, Methanococcus jannaschii.</title>
        <authorList>
            <person name="Bult C.J."/>
            <person name="White O."/>
            <person name="Olsen G.J."/>
            <person name="Zhou L."/>
            <person name="Fleischmann R.D."/>
            <person name="Sutton G.G."/>
            <person name="Blake J.A."/>
            <person name="FitzGerald L.M."/>
            <person name="Clayton R.A."/>
            <person name="Gocayne J.D."/>
            <person name="Kerlavage A.R."/>
            <person name="Dougherty B.A."/>
            <person name="Tomb J.-F."/>
            <person name="Adams M.D."/>
            <person name="Reich C.I."/>
            <person name="Overbeek R."/>
            <person name="Kirkness E.F."/>
            <person name="Weinstock K.G."/>
            <person name="Merrick J.M."/>
            <person name="Glodek A."/>
            <person name="Scott J.L."/>
            <person name="Geoghagen N.S.M."/>
            <person name="Weidman J.F."/>
            <person name="Fuhrmann J.L."/>
            <person name="Nguyen D."/>
            <person name="Utterback T.R."/>
            <person name="Kelley J.M."/>
            <person name="Peterson J.D."/>
            <person name="Sadow P.W."/>
            <person name="Hanna M.C."/>
            <person name="Cotton M.D."/>
            <person name="Roberts K.M."/>
            <person name="Hurst M.A."/>
            <person name="Kaine B.P."/>
            <person name="Borodovsky M."/>
            <person name="Klenk H.-P."/>
            <person name="Fraser C.M."/>
            <person name="Smith H.O."/>
            <person name="Woese C.R."/>
            <person name="Venter J.C."/>
        </authorList>
    </citation>
    <scope>NUCLEOTIDE SEQUENCE [LARGE SCALE GENOMIC DNA]</scope>
    <source>
        <strain>ATCC 43067 / DSM 2661 / JAL-1 / JCM 10045 / NBRC 100440</strain>
    </source>
</reference>